<reference key="1">
    <citation type="journal article" date="2006" name="J. Bacteriol.">
        <title>Pathogenomic sequence analysis of Bacillus cereus and Bacillus thuringiensis isolates closely related to Bacillus anthracis.</title>
        <authorList>
            <person name="Han C.S."/>
            <person name="Xie G."/>
            <person name="Challacombe J.F."/>
            <person name="Altherr M.R."/>
            <person name="Bhotika S.S."/>
            <person name="Bruce D."/>
            <person name="Campbell C.S."/>
            <person name="Campbell M.L."/>
            <person name="Chen J."/>
            <person name="Chertkov O."/>
            <person name="Cleland C."/>
            <person name="Dimitrijevic M."/>
            <person name="Doggett N.A."/>
            <person name="Fawcett J.J."/>
            <person name="Glavina T."/>
            <person name="Goodwin L.A."/>
            <person name="Hill K.K."/>
            <person name="Hitchcock P."/>
            <person name="Jackson P.J."/>
            <person name="Keim P."/>
            <person name="Kewalramani A.R."/>
            <person name="Longmire J."/>
            <person name="Lucas S."/>
            <person name="Malfatti S."/>
            <person name="McMurry K."/>
            <person name="Meincke L.J."/>
            <person name="Misra M."/>
            <person name="Moseman B.L."/>
            <person name="Mundt M."/>
            <person name="Munk A.C."/>
            <person name="Okinaka R.T."/>
            <person name="Parson-Quintana B."/>
            <person name="Reilly L.P."/>
            <person name="Richardson P."/>
            <person name="Robinson D.L."/>
            <person name="Rubin E."/>
            <person name="Saunders E."/>
            <person name="Tapia R."/>
            <person name="Tesmer J.G."/>
            <person name="Thayer N."/>
            <person name="Thompson L.S."/>
            <person name="Tice H."/>
            <person name="Ticknor L.O."/>
            <person name="Wills P.L."/>
            <person name="Brettin T.S."/>
            <person name="Gilna P."/>
        </authorList>
    </citation>
    <scope>NUCLEOTIDE SEQUENCE [LARGE SCALE GENOMIC DNA]</scope>
    <source>
        <strain>ZK / E33L</strain>
    </source>
</reference>
<evidence type="ECO:0000255" key="1">
    <source>
        <dbReference type="HAMAP-Rule" id="MF_01805"/>
    </source>
</evidence>
<name>SCPA_BACCZ</name>
<gene>
    <name evidence="1" type="primary">scpA</name>
    <name type="ordered locus">BCE33L3814</name>
</gene>
<proteinExistence type="inferred from homology"/>
<organism>
    <name type="scientific">Bacillus cereus (strain ZK / E33L)</name>
    <dbReference type="NCBI Taxonomy" id="288681"/>
    <lineage>
        <taxon>Bacteria</taxon>
        <taxon>Bacillati</taxon>
        <taxon>Bacillota</taxon>
        <taxon>Bacilli</taxon>
        <taxon>Bacillales</taxon>
        <taxon>Bacillaceae</taxon>
        <taxon>Bacillus</taxon>
        <taxon>Bacillus cereus group</taxon>
    </lineage>
</organism>
<feature type="chain" id="PRO_1000069966" description="Segregation and condensation protein A">
    <location>
        <begin position="1"/>
        <end position="247"/>
    </location>
</feature>
<dbReference type="EMBL" id="CP000001">
    <property type="protein sequence ID" value="AAU16453.1"/>
    <property type="molecule type" value="Genomic_DNA"/>
</dbReference>
<dbReference type="RefSeq" id="WP_001199758.1">
    <property type="nucleotide sequence ID" value="NZ_CP009968.1"/>
</dbReference>
<dbReference type="SMR" id="Q635M2"/>
<dbReference type="GeneID" id="93007047"/>
<dbReference type="KEGG" id="bcz:BCE33L3814"/>
<dbReference type="PATRIC" id="fig|288681.22.peg.1589"/>
<dbReference type="Proteomes" id="UP000002612">
    <property type="component" value="Chromosome"/>
</dbReference>
<dbReference type="GO" id="GO:0005737">
    <property type="term" value="C:cytoplasm"/>
    <property type="evidence" value="ECO:0007669"/>
    <property type="project" value="UniProtKB-SubCell"/>
</dbReference>
<dbReference type="GO" id="GO:0051301">
    <property type="term" value="P:cell division"/>
    <property type="evidence" value="ECO:0007669"/>
    <property type="project" value="UniProtKB-KW"/>
</dbReference>
<dbReference type="GO" id="GO:0007059">
    <property type="term" value="P:chromosome segregation"/>
    <property type="evidence" value="ECO:0007669"/>
    <property type="project" value="UniProtKB-UniRule"/>
</dbReference>
<dbReference type="GO" id="GO:0006260">
    <property type="term" value="P:DNA replication"/>
    <property type="evidence" value="ECO:0007669"/>
    <property type="project" value="UniProtKB-UniRule"/>
</dbReference>
<dbReference type="Gene3D" id="6.10.250.2410">
    <property type="match status" value="1"/>
</dbReference>
<dbReference type="Gene3D" id="1.10.10.580">
    <property type="entry name" value="Structural maintenance of chromosome 1. Chain E"/>
    <property type="match status" value="1"/>
</dbReference>
<dbReference type="HAMAP" id="MF_01805">
    <property type="entry name" value="ScpA"/>
    <property type="match status" value="1"/>
</dbReference>
<dbReference type="InterPro" id="IPR003768">
    <property type="entry name" value="ScpA"/>
</dbReference>
<dbReference type="InterPro" id="IPR023093">
    <property type="entry name" value="ScpA-like_C"/>
</dbReference>
<dbReference type="NCBIfam" id="NF000992">
    <property type="entry name" value="PRK00104.1-1"/>
    <property type="match status" value="1"/>
</dbReference>
<dbReference type="NCBIfam" id="NF000995">
    <property type="entry name" value="PRK00104.1-4"/>
    <property type="match status" value="1"/>
</dbReference>
<dbReference type="PANTHER" id="PTHR33969">
    <property type="entry name" value="SEGREGATION AND CONDENSATION PROTEIN A"/>
    <property type="match status" value="1"/>
</dbReference>
<dbReference type="PANTHER" id="PTHR33969:SF2">
    <property type="entry name" value="SEGREGATION AND CONDENSATION PROTEIN A"/>
    <property type="match status" value="1"/>
</dbReference>
<dbReference type="Pfam" id="PF02616">
    <property type="entry name" value="SMC_ScpA"/>
    <property type="match status" value="1"/>
</dbReference>
<sequence length="247" mass="29346">MQYNFKVEAFEGPLDLLLHLIHRYEIDIYNIPVAEITEQYLSYVHTMKELQLDVASEYLVMAATLLQIKSKMLLPKHEEDVLDNGDDFIDDPRQELMERLIEYKKYKQVATELKEREQERAQLYTRPPIDFTSLQQEEETNLPLDVTLYDMLAAFQKLMRRKKAKKPVTTRITRQEIPIEQRMTDILKQLEIQGGRQSFYDLFVDDEREIMVVTFLAVLELMKNQQIIIEQEHNFDEIFVSSYTKSA</sequence>
<comment type="function">
    <text evidence="1">Participates in chromosomal partition during cell division. May act via the formation of a condensin-like complex containing Smc and ScpB that pull DNA away from mid-cell into both cell halves.</text>
</comment>
<comment type="subunit">
    <text evidence="1">Component of a cohesin-like complex composed of ScpA, ScpB and the Smc homodimer, in which ScpA and ScpB bind to the head domain of Smc. The presence of the three proteins is required for the association of the complex with DNA.</text>
</comment>
<comment type="subcellular location">
    <subcellularLocation>
        <location evidence="1">Cytoplasm</location>
    </subcellularLocation>
    <text evidence="1">Associated with two foci at the outer edges of the nucleoid region in young cells, and at four foci within both cell halves in older cells.</text>
</comment>
<comment type="similarity">
    <text evidence="1">Belongs to the ScpA family.</text>
</comment>
<keyword id="KW-0131">Cell cycle</keyword>
<keyword id="KW-0132">Cell division</keyword>
<keyword id="KW-0159">Chromosome partition</keyword>
<keyword id="KW-0963">Cytoplasm</keyword>
<protein>
    <recommendedName>
        <fullName evidence="1">Segregation and condensation protein A</fullName>
    </recommendedName>
</protein>
<accession>Q635M2</accession>